<protein>
    <recommendedName>
        <fullName>Mannitol-1-phosphatase</fullName>
        <shortName>M1Pase</shortName>
        <ecNumber>3.1.3.22</ecNumber>
    </recommendedName>
</protein>
<sequence>MAETEWTPEALSGRYEEIKSCIPQQLEAYARFLREAAPEDLRRWQQIAQDLKLELNLENGRIKYKKEFKPLELPVDICYIRHGKTQGNTEPRVFQGQVDYANNQLTQQGQQQAAAAATKLEAMAAAKEFIPDLLLSSPLLRAVHTAQPFVDANPKPLFRVLPELAEMAFGEWDNRKVAELEKDDPAHLFYLQQNAVIKAKGPHRICCQLWQSPEWLEGKKELPAENFLECLDRQRKALIKVGEIAKELCGPSCGERKPRVAVYGHSMAGAAVSVLLGFGKEDQLGFLGFDGNYIMPNATPTILIPNAKP</sequence>
<dbReference type="EC" id="3.1.3.22"/>
<dbReference type="EMBL" id="AF032462">
    <property type="protein sequence ID" value="AAC38954.1"/>
    <property type="molecule type" value="mRNA"/>
</dbReference>
<dbReference type="SMR" id="O43980"/>
<dbReference type="VEuPathDB" id="ToxoDB:ETH2_0825200"/>
<dbReference type="VEuPathDB" id="ToxoDB:ETH_00027300"/>
<dbReference type="BioCyc" id="MetaCyc:MONOMER-15724"/>
<dbReference type="GO" id="GO:0005829">
    <property type="term" value="C:cytosol"/>
    <property type="evidence" value="ECO:0007669"/>
    <property type="project" value="TreeGrafter"/>
</dbReference>
<dbReference type="GO" id="GO:0004331">
    <property type="term" value="F:fructose-2,6-bisphosphate 2-phosphatase activity"/>
    <property type="evidence" value="ECO:0007669"/>
    <property type="project" value="TreeGrafter"/>
</dbReference>
<dbReference type="GO" id="GO:0050084">
    <property type="term" value="F:mannitol-1-phosphatase activity"/>
    <property type="evidence" value="ECO:0000314"/>
    <property type="project" value="UniProtKB"/>
</dbReference>
<dbReference type="GO" id="GO:0019593">
    <property type="term" value="P:mannitol biosynthetic process"/>
    <property type="evidence" value="ECO:0000314"/>
    <property type="project" value="UniProtKB"/>
</dbReference>
<dbReference type="GO" id="GO:0045820">
    <property type="term" value="P:negative regulation of glycolytic process"/>
    <property type="evidence" value="ECO:0007669"/>
    <property type="project" value="TreeGrafter"/>
</dbReference>
<dbReference type="GO" id="GO:0043456">
    <property type="term" value="P:regulation of pentose-phosphate shunt"/>
    <property type="evidence" value="ECO:0007669"/>
    <property type="project" value="TreeGrafter"/>
</dbReference>
<dbReference type="Gene3D" id="3.40.50.1240">
    <property type="entry name" value="Phosphoglycerate mutase-like"/>
    <property type="match status" value="1"/>
</dbReference>
<dbReference type="InterPro" id="IPR013078">
    <property type="entry name" value="His_Pase_superF_clade-1"/>
</dbReference>
<dbReference type="InterPro" id="IPR029033">
    <property type="entry name" value="His_PPase_superfam"/>
</dbReference>
<dbReference type="InterPro" id="IPR051695">
    <property type="entry name" value="Phosphoglycerate_Mutase"/>
</dbReference>
<dbReference type="PANTHER" id="PTHR46517">
    <property type="entry name" value="FRUCTOSE-2,6-BISPHOSPHATASE TIGAR"/>
    <property type="match status" value="1"/>
</dbReference>
<dbReference type="PANTHER" id="PTHR46517:SF1">
    <property type="entry name" value="FRUCTOSE-2,6-BISPHOSPHATASE TIGAR"/>
    <property type="match status" value="1"/>
</dbReference>
<dbReference type="Pfam" id="PF00300">
    <property type="entry name" value="His_Phos_1"/>
    <property type="match status" value="1"/>
</dbReference>
<dbReference type="SMART" id="SM00855">
    <property type="entry name" value="PGAM"/>
    <property type="match status" value="1"/>
</dbReference>
<dbReference type="SUPFAM" id="SSF53254">
    <property type="entry name" value="Phosphoglycerate mutase-like"/>
    <property type="match status" value="1"/>
</dbReference>
<feature type="chain" id="PRO_0000418463" description="Mannitol-1-phosphatase">
    <location>
        <begin position="1"/>
        <end position="309"/>
    </location>
</feature>
<feature type="active site" description="Tele-phosphohistidine intermediate" evidence="1">
    <location>
        <position position="82"/>
    </location>
</feature>
<feature type="active site" description="Proton donor/acceptor" evidence="1">
    <location>
        <position position="166"/>
    </location>
</feature>
<name>M1PAS_EIMTE</name>
<keyword id="KW-0903">Direct protein sequencing</keyword>
<keyword id="KW-0378">Hydrolase</keyword>
<reference key="1">
    <citation type="journal article" date="1998" name="J. Biol. Chem.">
        <title>Molecular cloning and functional expression of mannitol-1-phosphatase from the apicomplexan parasite Eimeria tenella.</title>
        <authorList>
            <person name="Liberator P."/>
            <person name="Anderson J."/>
            <person name="Feiglin M."/>
            <person name="Sardana M."/>
            <person name="Griffin P."/>
            <person name="Schmatz D."/>
            <person name="Myers R.W."/>
        </authorList>
    </citation>
    <scope>NUCLEOTIDE SEQUENCE [GENOMIC DNA]</scope>
    <scope>PROTEIN SEQUENCE OF 20-30; 67-81; 93-117; 128-132; 142-158; 160-175; 177-187; 205-214 AND 282-293</scope>
    <scope>FUNCTION</scope>
    <scope>CATALYTIC ACTIVITY</scope>
    <scope>ENZYME REACTION</scope>
    <scope>BIOPHYSICOCHEMICAL PROPERTIES</scope>
</reference>
<comment type="function">
    <text evidence="2">Key enzyme for mannitol biosynthesis.</text>
</comment>
<comment type="catalytic activity">
    <reaction evidence="2">
        <text>D-mannitol 1-phosphate + H2O = D-mannitol + phosphate</text>
        <dbReference type="Rhea" id="RHEA:19537"/>
        <dbReference type="ChEBI" id="CHEBI:15377"/>
        <dbReference type="ChEBI" id="CHEBI:16899"/>
        <dbReference type="ChEBI" id="CHEBI:43474"/>
        <dbReference type="ChEBI" id="CHEBI:61381"/>
        <dbReference type="EC" id="3.1.3.22"/>
    </reaction>
</comment>
<comment type="activity regulation">
    <text>By diethyl pyrocarbonate (DEPC).</text>
</comment>
<comment type="biophysicochemical properties">
    <kinetics>
        <KM evidence="2">69 uM for D-mannitol 1-phosphate</KM>
        <Vmax evidence="2">953.0 umol/min/mg enzyme</Vmax>
        <text>kcat is 550 sec(-1).</text>
    </kinetics>
</comment>
<comment type="similarity">
    <text evidence="3">Belongs to the phosphoglycerate mutase family.</text>
</comment>
<accession>O43980</accession>
<organism>
    <name type="scientific">Eimeria tenella</name>
    <name type="common">Coccidian parasite</name>
    <dbReference type="NCBI Taxonomy" id="5802"/>
    <lineage>
        <taxon>Eukaryota</taxon>
        <taxon>Sar</taxon>
        <taxon>Alveolata</taxon>
        <taxon>Apicomplexa</taxon>
        <taxon>Conoidasida</taxon>
        <taxon>Coccidia</taxon>
        <taxon>Eucoccidiorida</taxon>
        <taxon>Eimeriorina</taxon>
        <taxon>Eimeriidae</taxon>
        <taxon>Eimeria</taxon>
    </lineage>
</organism>
<proteinExistence type="evidence at protein level"/>
<evidence type="ECO:0000250" key="1">
    <source>
        <dbReference type="UniProtKB" id="P62707"/>
    </source>
</evidence>
<evidence type="ECO:0000269" key="2">
    <source>
    </source>
</evidence>
<evidence type="ECO:0000305" key="3"/>